<organism>
    <name type="scientific">Escherichia coli (strain 55989 / EAEC)</name>
    <dbReference type="NCBI Taxonomy" id="585055"/>
    <lineage>
        <taxon>Bacteria</taxon>
        <taxon>Pseudomonadati</taxon>
        <taxon>Pseudomonadota</taxon>
        <taxon>Gammaproteobacteria</taxon>
        <taxon>Enterobacterales</taxon>
        <taxon>Enterobacteriaceae</taxon>
        <taxon>Escherichia</taxon>
    </lineage>
</organism>
<sequence length="299" mass="33367">MTDNTRLRIAMQKSGRLSDDSRELLARCGIKINLHTQRLIAMAENMPIDILRVRDDDIPGLVMDGVVDLGIIGENVLEEELLNRRAQGEDPRYFTLRRLDFGGCRLSLATPVDEAWDGPLSLNGKRIATSYPHLLKRYLDQKGISFKSCLLNGSVEVAPRAGLADAICDLVSTGATLEANGLREVEVIYRSKACLIQRDGEMEESKQQLIDKLLTRIQGVIQARESKYIMMHAPTERLDEVIALLPGAERPTILPLAGDQQRVAMHMVSSETLFWETMEKLKALGASSILVLPIEKMME</sequence>
<gene>
    <name evidence="1" type="primary">hisG</name>
    <name type="ordered locus">EC55989_2278</name>
</gene>
<dbReference type="EC" id="2.4.2.17" evidence="1"/>
<dbReference type="EMBL" id="CU928145">
    <property type="protein sequence ID" value="CAU98151.1"/>
    <property type="molecule type" value="Genomic_DNA"/>
</dbReference>
<dbReference type="RefSeq" id="WP_000131782.1">
    <property type="nucleotide sequence ID" value="NZ_CP028304.1"/>
</dbReference>
<dbReference type="SMR" id="B7L9P6"/>
<dbReference type="GeneID" id="93775154"/>
<dbReference type="KEGG" id="eck:EC55989_2278"/>
<dbReference type="HOGENOM" id="CLU_038115_1_0_6"/>
<dbReference type="UniPathway" id="UPA00031">
    <property type="reaction ID" value="UER00006"/>
</dbReference>
<dbReference type="Proteomes" id="UP000000746">
    <property type="component" value="Chromosome"/>
</dbReference>
<dbReference type="GO" id="GO:0005737">
    <property type="term" value="C:cytoplasm"/>
    <property type="evidence" value="ECO:0007669"/>
    <property type="project" value="UniProtKB-SubCell"/>
</dbReference>
<dbReference type="GO" id="GO:0005524">
    <property type="term" value="F:ATP binding"/>
    <property type="evidence" value="ECO:0007669"/>
    <property type="project" value="UniProtKB-KW"/>
</dbReference>
<dbReference type="GO" id="GO:0003879">
    <property type="term" value="F:ATP phosphoribosyltransferase activity"/>
    <property type="evidence" value="ECO:0007669"/>
    <property type="project" value="UniProtKB-UniRule"/>
</dbReference>
<dbReference type="GO" id="GO:0000287">
    <property type="term" value="F:magnesium ion binding"/>
    <property type="evidence" value="ECO:0007669"/>
    <property type="project" value="UniProtKB-UniRule"/>
</dbReference>
<dbReference type="GO" id="GO:0000105">
    <property type="term" value="P:L-histidine biosynthetic process"/>
    <property type="evidence" value="ECO:0007669"/>
    <property type="project" value="UniProtKB-UniRule"/>
</dbReference>
<dbReference type="CDD" id="cd13592">
    <property type="entry name" value="PBP2_HisGL2"/>
    <property type="match status" value="1"/>
</dbReference>
<dbReference type="FunFam" id="3.30.70.120:FF:000002">
    <property type="entry name" value="ATP phosphoribosyltransferase"/>
    <property type="match status" value="1"/>
</dbReference>
<dbReference type="FunFam" id="3.40.190.10:FF:000008">
    <property type="entry name" value="ATP phosphoribosyltransferase"/>
    <property type="match status" value="1"/>
</dbReference>
<dbReference type="Gene3D" id="3.30.70.120">
    <property type="match status" value="1"/>
</dbReference>
<dbReference type="Gene3D" id="3.40.190.10">
    <property type="entry name" value="Periplasmic binding protein-like II"/>
    <property type="match status" value="2"/>
</dbReference>
<dbReference type="HAMAP" id="MF_00079">
    <property type="entry name" value="HisG_Long"/>
    <property type="match status" value="1"/>
</dbReference>
<dbReference type="InterPro" id="IPR020621">
    <property type="entry name" value="ATP-PRT_HisG_long"/>
</dbReference>
<dbReference type="InterPro" id="IPR013820">
    <property type="entry name" value="ATP_PRibTrfase_cat"/>
</dbReference>
<dbReference type="InterPro" id="IPR018198">
    <property type="entry name" value="ATP_PRibTrfase_CS"/>
</dbReference>
<dbReference type="InterPro" id="IPR001348">
    <property type="entry name" value="ATP_PRibTrfase_HisG"/>
</dbReference>
<dbReference type="InterPro" id="IPR013115">
    <property type="entry name" value="HisG_C"/>
</dbReference>
<dbReference type="InterPro" id="IPR011322">
    <property type="entry name" value="N-reg_PII-like_a/b"/>
</dbReference>
<dbReference type="InterPro" id="IPR015867">
    <property type="entry name" value="N-reg_PII/ATP_PRibTrfase_C"/>
</dbReference>
<dbReference type="NCBIfam" id="TIGR00070">
    <property type="entry name" value="hisG"/>
    <property type="match status" value="1"/>
</dbReference>
<dbReference type="NCBIfam" id="TIGR03455">
    <property type="entry name" value="HisG_C-term"/>
    <property type="match status" value="1"/>
</dbReference>
<dbReference type="PANTHER" id="PTHR21403:SF8">
    <property type="entry name" value="ATP PHOSPHORIBOSYLTRANSFERASE"/>
    <property type="match status" value="1"/>
</dbReference>
<dbReference type="PANTHER" id="PTHR21403">
    <property type="entry name" value="ATP PHOSPHORIBOSYLTRANSFERASE ATP-PRTASE"/>
    <property type="match status" value="1"/>
</dbReference>
<dbReference type="Pfam" id="PF01634">
    <property type="entry name" value="HisG"/>
    <property type="match status" value="1"/>
</dbReference>
<dbReference type="Pfam" id="PF08029">
    <property type="entry name" value="HisG_C"/>
    <property type="match status" value="1"/>
</dbReference>
<dbReference type="SUPFAM" id="SSF54913">
    <property type="entry name" value="GlnB-like"/>
    <property type="match status" value="1"/>
</dbReference>
<dbReference type="SUPFAM" id="SSF53850">
    <property type="entry name" value="Periplasmic binding protein-like II"/>
    <property type="match status" value="1"/>
</dbReference>
<dbReference type="PROSITE" id="PS01316">
    <property type="entry name" value="ATP_P_PHORIBOSYLTR"/>
    <property type="match status" value="1"/>
</dbReference>
<accession>B7L9P6</accession>
<feature type="chain" id="PRO_1000118251" description="ATP phosphoribosyltransferase">
    <location>
        <begin position="1"/>
        <end position="299"/>
    </location>
</feature>
<name>HIS1_ECO55</name>
<protein>
    <recommendedName>
        <fullName evidence="1">ATP phosphoribosyltransferase</fullName>
        <shortName evidence="1">ATP-PRT</shortName>
        <shortName evidence="1">ATP-PRTase</shortName>
        <ecNumber evidence="1">2.4.2.17</ecNumber>
    </recommendedName>
</protein>
<comment type="function">
    <text evidence="1">Catalyzes the condensation of ATP and 5-phosphoribose 1-diphosphate to form N'-(5'-phosphoribosyl)-ATP (PR-ATP). Has a crucial role in the pathway because the rate of histidine biosynthesis seems to be controlled primarily by regulation of HisG enzymatic activity.</text>
</comment>
<comment type="catalytic activity">
    <reaction evidence="1">
        <text>1-(5-phospho-beta-D-ribosyl)-ATP + diphosphate = 5-phospho-alpha-D-ribose 1-diphosphate + ATP</text>
        <dbReference type="Rhea" id="RHEA:18473"/>
        <dbReference type="ChEBI" id="CHEBI:30616"/>
        <dbReference type="ChEBI" id="CHEBI:33019"/>
        <dbReference type="ChEBI" id="CHEBI:58017"/>
        <dbReference type="ChEBI" id="CHEBI:73183"/>
        <dbReference type="EC" id="2.4.2.17"/>
    </reaction>
</comment>
<comment type="cofactor">
    <cofactor evidence="1">
        <name>Mg(2+)</name>
        <dbReference type="ChEBI" id="CHEBI:18420"/>
    </cofactor>
</comment>
<comment type="activity regulation">
    <text evidence="1">Feedback inhibited by histidine.</text>
</comment>
<comment type="pathway">
    <text evidence="1">Amino-acid biosynthesis; L-histidine biosynthesis; L-histidine from 5-phospho-alpha-D-ribose 1-diphosphate: step 1/9.</text>
</comment>
<comment type="subunit">
    <text evidence="1">Equilibrium between an active dimeric form, an inactive hexameric form and higher aggregates. Interconversion between the various forms is largely reversible and is influenced by the natural substrates and inhibitors of the enzyme.</text>
</comment>
<comment type="subcellular location">
    <subcellularLocation>
        <location evidence="1">Cytoplasm</location>
    </subcellularLocation>
</comment>
<comment type="similarity">
    <text evidence="1">Belongs to the ATP phosphoribosyltransferase family. Long subfamily.</text>
</comment>
<keyword id="KW-0028">Amino-acid biosynthesis</keyword>
<keyword id="KW-0067">ATP-binding</keyword>
<keyword id="KW-0963">Cytoplasm</keyword>
<keyword id="KW-0328">Glycosyltransferase</keyword>
<keyword id="KW-0368">Histidine biosynthesis</keyword>
<keyword id="KW-0460">Magnesium</keyword>
<keyword id="KW-0479">Metal-binding</keyword>
<keyword id="KW-0547">Nucleotide-binding</keyword>
<keyword id="KW-1185">Reference proteome</keyword>
<keyword id="KW-0808">Transferase</keyword>
<proteinExistence type="inferred from homology"/>
<evidence type="ECO:0000255" key="1">
    <source>
        <dbReference type="HAMAP-Rule" id="MF_00079"/>
    </source>
</evidence>
<reference key="1">
    <citation type="journal article" date="2009" name="PLoS Genet.">
        <title>Organised genome dynamics in the Escherichia coli species results in highly diverse adaptive paths.</title>
        <authorList>
            <person name="Touchon M."/>
            <person name="Hoede C."/>
            <person name="Tenaillon O."/>
            <person name="Barbe V."/>
            <person name="Baeriswyl S."/>
            <person name="Bidet P."/>
            <person name="Bingen E."/>
            <person name="Bonacorsi S."/>
            <person name="Bouchier C."/>
            <person name="Bouvet O."/>
            <person name="Calteau A."/>
            <person name="Chiapello H."/>
            <person name="Clermont O."/>
            <person name="Cruveiller S."/>
            <person name="Danchin A."/>
            <person name="Diard M."/>
            <person name="Dossat C."/>
            <person name="Karoui M.E."/>
            <person name="Frapy E."/>
            <person name="Garry L."/>
            <person name="Ghigo J.M."/>
            <person name="Gilles A.M."/>
            <person name="Johnson J."/>
            <person name="Le Bouguenec C."/>
            <person name="Lescat M."/>
            <person name="Mangenot S."/>
            <person name="Martinez-Jehanne V."/>
            <person name="Matic I."/>
            <person name="Nassif X."/>
            <person name="Oztas S."/>
            <person name="Petit M.A."/>
            <person name="Pichon C."/>
            <person name="Rouy Z."/>
            <person name="Ruf C.S."/>
            <person name="Schneider D."/>
            <person name="Tourret J."/>
            <person name="Vacherie B."/>
            <person name="Vallenet D."/>
            <person name="Medigue C."/>
            <person name="Rocha E.P.C."/>
            <person name="Denamur E."/>
        </authorList>
    </citation>
    <scope>NUCLEOTIDE SEQUENCE [LARGE SCALE GENOMIC DNA]</scope>
    <source>
        <strain>55989 / EAEC</strain>
    </source>
</reference>